<organism>
    <name type="scientific">Human herpesvirus 1 (strain HFEM)</name>
    <name type="common">HHV-1</name>
    <name type="synonym">Human herpes simplex virus 1</name>
    <dbReference type="NCBI Taxonomy" id="10303"/>
    <lineage>
        <taxon>Viruses</taxon>
        <taxon>Duplodnaviria</taxon>
        <taxon>Heunggongvirae</taxon>
        <taxon>Peploviricota</taxon>
        <taxon>Herviviricetes</taxon>
        <taxon>Herpesvirales</taxon>
        <taxon>Orthoherpesviridae</taxon>
        <taxon>Alphaherpesvirinae</taxon>
        <taxon>Simplexvirus</taxon>
        <taxon>Simplexvirus humanalpha1</taxon>
        <taxon>Human herpesvirus 1</taxon>
    </lineage>
</organism>
<reference key="1">
    <citation type="journal article" date="1992" name="Virus Res.">
        <title>Determination of the coding capacity of the BamHI DNA fragment B of apathogenic Herpes simplex virus type 1 strain HFEM by DNA nucleotide sequence analysis.</title>
        <authorList>
            <person name="Rosen-Wolff A."/>
            <person name="Frank S."/>
            <person name="Raab K."/>
            <person name="Moyal M."/>
            <person name="Becker Y."/>
            <person name="Darai G."/>
        </authorList>
    </citation>
    <scope>NUCLEOTIDE SEQUENCE [GENOMIC DNA]</scope>
</reference>
<sequence length="186" mass="20492">MTATPLTNLFLRAPDITHVAPPYCLNATWQAETAMHTSKTDSACVAVRSYLVRASCETSGTIHCFFFAVYKDTHHTPPLITKLRNFADLVNHPPVLRELEDKRGVRLRCARPFSVGTIKDVSGSGASSAGEYTINGIVYHCHCRYPFSKTCWMGASAALQHLRSISSSGMAARAAEHRRVKIKIKA</sequence>
<feature type="chain" id="PRO_0000116118" description="Tegument protein UL55">
    <location>
        <begin position="1"/>
        <end position="186"/>
    </location>
</feature>
<dbReference type="EMBL" id="M90438">
    <property type="status" value="NOT_ANNOTATED_CDS"/>
    <property type="molecule type" value="Genomic_DNA"/>
</dbReference>
<dbReference type="PIR" id="B48560">
    <property type="entry name" value="B48560"/>
</dbReference>
<dbReference type="GO" id="GO:0044204">
    <property type="term" value="C:host cell nuclear matrix"/>
    <property type="evidence" value="ECO:0007669"/>
    <property type="project" value="UniProtKB-SubCell"/>
</dbReference>
<dbReference type="GO" id="GO:0019033">
    <property type="term" value="C:viral tegument"/>
    <property type="evidence" value="ECO:0007669"/>
    <property type="project" value="UniProtKB-SubCell"/>
</dbReference>
<dbReference type="GO" id="GO:0019058">
    <property type="term" value="P:viral life cycle"/>
    <property type="evidence" value="ECO:0007669"/>
    <property type="project" value="InterPro"/>
</dbReference>
<dbReference type="InterPro" id="IPR007622">
    <property type="entry name" value="Herpes_UL55"/>
</dbReference>
<dbReference type="Pfam" id="PF04537">
    <property type="entry name" value="Herpes_UL55"/>
    <property type="match status" value="1"/>
</dbReference>
<comment type="subcellular location">
    <subcellularLocation>
        <location evidence="1">Virion tegument</location>
    </subcellularLocation>
    <subcellularLocation>
        <location evidence="1">Host nucleus matrix</location>
    </subcellularLocation>
</comment>
<comment type="similarity">
    <text evidence="2">Belongs to the alphaherpesvirinae HHV-1 UL55 family.</text>
</comment>
<name>TEG6_HHV1E</name>
<evidence type="ECO:0000250" key="1"/>
<evidence type="ECO:0000305" key="2"/>
<organismHost>
    <name type="scientific">Homo sapiens</name>
    <name type="common">Human</name>
    <dbReference type="NCBI Taxonomy" id="9606"/>
</organismHost>
<gene>
    <name type="primary">UL55</name>
</gene>
<protein>
    <recommendedName>
        <fullName>Tegument protein UL55</fullName>
    </recommendedName>
</protein>
<proteinExistence type="inferred from homology"/>
<keyword id="KW-1048">Host nucleus</keyword>
<keyword id="KW-0946">Virion</keyword>
<keyword id="KW-0920">Virion tegument</keyword>
<accession>P36296</accession>